<keyword id="KW-0238">DNA-binding</keyword>
<keyword id="KW-0479">Metal-binding</keyword>
<keyword id="KW-0539">Nucleus</keyword>
<keyword id="KW-0597">Phosphoprotein</keyword>
<keyword id="KW-1185">Reference proteome</keyword>
<keyword id="KW-0677">Repeat</keyword>
<keyword id="KW-0678">Repressor</keyword>
<keyword id="KW-0804">Transcription</keyword>
<keyword id="KW-0805">Transcription regulation</keyword>
<keyword id="KW-0862">Zinc</keyword>
<keyword id="KW-0863">Zinc-finger</keyword>
<name>ZN136_PONAB</name>
<gene>
    <name type="primary">ZNF136</name>
</gene>
<proteinExistence type="evidence at transcript level"/>
<evidence type="ECO:0000250" key="1"/>
<evidence type="ECO:0000250" key="2">
    <source>
        <dbReference type="UniProtKB" id="P52737"/>
    </source>
</evidence>
<evidence type="ECO:0000255" key="3">
    <source>
        <dbReference type="PROSITE-ProRule" id="PRU00042"/>
    </source>
</evidence>
<evidence type="ECO:0000255" key="4">
    <source>
        <dbReference type="PROSITE-ProRule" id="PRU00119"/>
    </source>
</evidence>
<evidence type="ECO:0000305" key="5"/>
<accession>Q5REK1</accession>
<comment type="function">
    <text evidence="1">May be involved in transcriptional regulation as a weak repressor when alone, or a potent one when fused with a heterologous protein containing a KRAB B-domain.</text>
</comment>
<comment type="subcellular location">
    <subcellularLocation>
        <location evidence="5">Nucleus</location>
    </subcellularLocation>
</comment>
<comment type="similarity">
    <text evidence="5">Belongs to the krueppel C2H2-type zinc-finger protein family.</text>
</comment>
<organism>
    <name type="scientific">Pongo abelii</name>
    <name type="common">Sumatran orangutan</name>
    <name type="synonym">Pongo pygmaeus abelii</name>
    <dbReference type="NCBI Taxonomy" id="9601"/>
    <lineage>
        <taxon>Eukaryota</taxon>
        <taxon>Metazoa</taxon>
        <taxon>Chordata</taxon>
        <taxon>Craniata</taxon>
        <taxon>Vertebrata</taxon>
        <taxon>Euteleostomi</taxon>
        <taxon>Mammalia</taxon>
        <taxon>Eutheria</taxon>
        <taxon>Euarchontoglires</taxon>
        <taxon>Primates</taxon>
        <taxon>Haplorrhini</taxon>
        <taxon>Catarrhini</taxon>
        <taxon>Hominidae</taxon>
        <taxon>Pongo</taxon>
    </lineage>
</organism>
<dbReference type="EMBL" id="CR857524">
    <property type="protein sequence ID" value="CAH89806.1"/>
    <property type="molecule type" value="mRNA"/>
</dbReference>
<dbReference type="RefSeq" id="NP_001124834.1">
    <property type="nucleotide sequence ID" value="NM_001131362.2"/>
</dbReference>
<dbReference type="SMR" id="Q5REK1"/>
<dbReference type="GeneID" id="100171692"/>
<dbReference type="KEGG" id="pon:100171692"/>
<dbReference type="CTD" id="7695"/>
<dbReference type="eggNOG" id="KOG1721">
    <property type="taxonomic scope" value="Eukaryota"/>
</dbReference>
<dbReference type="InParanoid" id="Q5REK1"/>
<dbReference type="OrthoDB" id="4748970at2759"/>
<dbReference type="Proteomes" id="UP000001595">
    <property type="component" value="Unplaced"/>
</dbReference>
<dbReference type="GO" id="GO:0005634">
    <property type="term" value="C:nucleus"/>
    <property type="evidence" value="ECO:0007669"/>
    <property type="project" value="UniProtKB-SubCell"/>
</dbReference>
<dbReference type="GO" id="GO:0003677">
    <property type="term" value="F:DNA binding"/>
    <property type="evidence" value="ECO:0007669"/>
    <property type="project" value="UniProtKB-KW"/>
</dbReference>
<dbReference type="GO" id="GO:0008270">
    <property type="term" value="F:zinc ion binding"/>
    <property type="evidence" value="ECO:0007669"/>
    <property type="project" value="UniProtKB-KW"/>
</dbReference>
<dbReference type="GO" id="GO:0006355">
    <property type="term" value="P:regulation of DNA-templated transcription"/>
    <property type="evidence" value="ECO:0007669"/>
    <property type="project" value="InterPro"/>
</dbReference>
<dbReference type="CDD" id="cd07765">
    <property type="entry name" value="KRAB_A-box"/>
    <property type="match status" value="1"/>
</dbReference>
<dbReference type="FunFam" id="3.30.160.60:FF:001852">
    <property type="entry name" value="Zinc finger protein 136"/>
    <property type="match status" value="2"/>
</dbReference>
<dbReference type="FunFam" id="3.30.160.60:FF:002085">
    <property type="entry name" value="Zinc finger protein 136"/>
    <property type="match status" value="1"/>
</dbReference>
<dbReference type="FunFam" id="3.30.160.60:FF:002130">
    <property type="entry name" value="Zinc finger protein 136"/>
    <property type="match status" value="1"/>
</dbReference>
<dbReference type="FunFam" id="3.30.160.60:FF:000193">
    <property type="entry name" value="Zinc finger protein 300"/>
    <property type="match status" value="3"/>
</dbReference>
<dbReference type="FunFam" id="3.30.160.60:FF:000184">
    <property type="entry name" value="Zinc finger protein 333"/>
    <property type="match status" value="2"/>
</dbReference>
<dbReference type="FunFam" id="3.30.160.60:FF:002254">
    <property type="entry name" value="Zinc finger protein 540"/>
    <property type="match status" value="1"/>
</dbReference>
<dbReference type="FunFam" id="3.30.160.60:FF:000371">
    <property type="entry name" value="Zinc finger protein 555"/>
    <property type="match status" value="1"/>
</dbReference>
<dbReference type="FunFam" id="3.30.160.60:FF:000156">
    <property type="entry name" value="Zinc finger protein 568"/>
    <property type="match status" value="2"/>
</dbReference>
<dbReference type="FunFam" id="3.30.160.60:FF:000099">
    <property type="entry name" value="Zinc finger protein 79"/>
    <property type="match status" value="1"/>
</dbReference>
<dbReference type="Gene3D" id="6.10.140.140">
    <property type="match status" value="1"/>
</dbReference>
<dbReference type="Gene3D" id="3.30.160.60">
    <property type="entry name" value="Classic Zinc Finger"/>
    <property type="match status" value="14"/>
</dbReference>
<dbReference type="InterPro" id="IPR001909">
    <property type="entry name" value="KRAB"/>
</dbReference>
<dbReference type="InterPro" id="IPR036051">
    <property type="entry name" value="KRAB_dom_sf"/>
</dbReference>
<dbReference type="InterPro" id="IPR050758">
    <property type="entry name" value="Znf_C2H2-type"/>
</dbReference>
<dbReference type="InterPro" id="IPR036236">
    <property type="entry name" value="Znf_C2H2_sf"/>
</dbReference>
<dbReference type="InterPro" id="IPR013087">
    <property type="entry name" value="Znf_C2H2_type"/>
</dbReference>
<dbReference type="PANTHER" id="PTHR23234:SF10">
    <property type="entry name" value="RIKEN CDNA 6720489N17 GENE-RELATED"/>
    <property type="match status" value="1"/>
</dbReference>
<dbReference type="PANTHER" id="PTHR23234">
    <property type="entry name" value="ZNF44 PROTEIN"/>
    <property type="match status" value="1"/>
</dbReference>
<dbReference type="Pfam" id="PF01352">
    <property type="entry name" value="KRAB"/>
    <property type="match status" value="1"/>
</dbReference>
<dbReference type="Pfam" id="PF00096">
    <property type="entry name" value="zf-C2H2"/>
    <property type="match status" value="10"/>
</dbReference>
<dbReference type="Pfam" id="PF13894">
    <property type="entry name" value="zf-C2H2_4"/>
    <property type="match status" value="2"/>
</dbReference>
<dbReference type="SMART" id="SM00349">
    <property type="entry name" value="KRAB"/>
    <property type="match status" value="1"/>
</dbReference>
<dbReference type="SMART" id="SM00355">
    <property type="entry name" value="ZnF_C2H2"/>
    <property type="match status" value="14"/>
</dbReference>
<dbReference type="SUPFAM" id="SSF57667">
    <property type="entry name" value="beta-beta-alpha zinc fingers"/>
    <property type="match status" value="7"/>
</dbReference>
<dbReference type="SUPFAM" id="SSF109640">
    <property type="entry name" value="KRAB domain (Kruppel-associated box)"/>
    <property type="match status" value="1"/>
</dbReference>
<dbReference type="PROSITE" id="PS50805">
    <property type="entry name" value="KRAB"/>
    <property type="match status" value="1"/>
</dbReference>
<dbReference type="PROSITE" id="PS00028">
    <property type="entry name" value="ZINC_FINGER_C2H2_1"/>
    <property type="match status" value="13"/>
</dbReference>
<dbReference type="PROSITE" id="PS50157">
    <property type="entry name" value="ZINC_FINGER_C2H2_2"/>
    <property type="match status" value="14"/>
</dbReference>
<protein>
    <recommendedName>
        <fullName>Zinc finger protein 136</fullName>
    </recommendedName>
</protein>
<feature type="chain" id="PRO_0000269720" description="Zinc finger protein 136">
    <location>
        <begin position="1"/>
        <end position="540"/>
    </location>
</feature>
<feature type="domain" description="KRAB" evidence="4">
    <location>
        <begin position="4"/>
        <end position="90"/>
    </location>
</feature>
<feature type="zinc finger region" description="C2H2-type 1; degenerate" evidence="3">
    <location>
        <begin position="140"/>
        <end position="162"/>
    </location>
</feature>
<feature type="zinc finger region" description="C2H2-type 2" evidence="3">
    <location>
        <begin position="168"/>
        <end position="190"/>
    </location>
</feature>
<feature type="zinc finger region" description="C2H2-type 3" evidence="3">
    <location>
        <begin position="196"/>
        <end position="218"/>
    </location>
</feature>
<feature type="zinc finger region" description="C2H2-type 4" evidence="3">
    <location>
        <begin position="224"/>
        <end position="246"/>
    </location>
</feature>
<feature type="zinc finger region" description="C2H2-type 5" evidence="3">
    <location>
        <begin position="252"/>
        <end position="274"/>
    </location>
</feature>
<feature type="zinc finger region" description="C2H2-type 6" evidence="3">
    <location>
        <begin position="280"/>
        <end position="302"/>
    </location>
</feature>
<feature type="zinc finger region" description="C2H2-type 7" evidence="3">
    <location>
        <begin position="308"/>
        <end position="330"/>
    </location>
</feature>
<feature type="zinc finger region" description="C2H2-type 8" evidence="3">
    <location>
        <begin position="336"/>
        <end position="358"/>
    </location>
</feature>
<feature type="zinc finger region" description="C2H2-type 9" evidence="3">
    <location>
        <begin position="364"/>
        <end position="386"/>
    </location>
</feature>
<feature type="zinc finger region" description="C2H2-type 10" evidence="3">
    <location>
        <begin position="392"/>
        <end position="414"/>
    </location>
</feature>
<feature type="zinc finger region" description="C2H2-type 11" evidence="3">
    <location>
        <begin position="420"/>
        <end position="442"/>
    </location>
</feature>
<feature type="zinc finger region" description="C2H2-type 12" evidence="3">
    <location>
        <begin position="448"/>
        <end position="470"/>
    </location>
</feature>
<feature type="zinc finger region" description="C2H2-type 13" evidence="3">
    <location>
        <begin position="476"/>
        <end position="498"/>
    </location>
</feature>
<feature type="zinc finger region" description="C2H2-type 14" evidence="3">
    <location>
        <begin position="504"/>
        <end position="526"/>
    </location>
</feature>
<feature type="modified residue" description="Phosphoserine" evidence="2">
    <location>
        <position position="191"/>
    </location>
</feature>
<sequence length="540" mass="62785">MDSVAFEDVDVNFTQEEWALLDPSQKNLYRDVMWETMRNLASVGKKWKDQNIKDHYKHRGRNLRSHMLERLYQTKDSSQRGGIFSQFANQNLSKKIPGVKLCESIVYGEVSMGQSSLNRHIKDHSGHEPKKYQEYGEKPDTRNQCWKPFSSHHSFRTHEIIHTGEKLYDCKECGKTFFSLKRIRRHIITHSGYTPYKCKVCGKAFDYPSRFRTHERSHTGEKPYECKECGKAFTCITSVRRHMIKHTGDGPYKCKVCGKPFHSLSSFQVHERIHTGEKPFKCKQCGKAFSCSPTLRIHERTHTGEKPYECKQCGKAFSYLPSLRLHERIHTGEKPFVCKQCGKAFRSASTFQIHERTHTGEKPYECKECGEAFSCIPSMRRHMIKHTGEGPYKCKVCGKPFHSLSPFRVHERTHTGEKPYVCKHCGKAFVSSTSIRIHERTHTGEKPYECKQCGKAFSYLNSFRTHEMIHTGEKPFECKRCGKAFRSSSSFRLHERTHTGQKPYHCKECGKAYSCRASFQRHMLTHAEDGPPYKCMWESL</sequence>
<reference key="1">
    <citation type="submission" date="2004-11" db="EMBL/GenBank/DDBJ databases">
        <authorList>
            <consortium name="The German cDNA consortium"/>
        </authorList>
    </citation>
    <scope>NUCLEOTIDE SEQUENCE [LARGE SCALE MRNA]</scope>
    <source>
        <tissue>Kidney</tissue>
    </source>
</reference>